<organism>
    <name type="scientific">Anaeromyxobacter dehalogenans (strain 2CP-1 / ATCC BAA-258)</name>
    <dbReference type="NCBI Taxonomy" id="455488"/>
    <lineage>
        <taxon>Bacteria</taxon>
        <taxon>Pseudomonadati</taxon>
        <taxon>Myxococcota</taxon>
        <taxon>Myxococcia</taxon>
        <taxon>Myxococcales</taxon>
        <taxon>Cystobacterineae</taxon>
        <taxon>Anaeromyxobacteraceae</taxon>
        <taxon>Anaeromyxobacter</taxon>
    </lineage>
</organism>
<reference key="1">
    <citation type="submission" date="2009-01" db="EMBL/GenBank/DDBJ databases">
        <title>Complete sequence of Anaeromyxobacter dehalogenans 2CP-1.</title>
        <authorList>
            <person name="Lucas S."/>
            <person name="Copeland A."/>
            <person name="Lapidus A."/>
            <person name="Glavina del Rio T."/>
            <person name="Dalin E."/>
            <person name="Tice H."/>
            <person name="Bruce D."/>
            <person name="Goodwin L."/>
            <person name="Pitluck S."/>
            <person name="Saunders E."/>
            <person name="Brettin T."/>
            <person name="Detter J.C."/>
            <person name="Han C."/>
            <person name="Larimer F."/>
            <person name="Land M."/>
            <person name="Hauser L."/>
            <person name="Kyrpides N."/>
            <person name="Ovchinnikova G."/>
            <person name="Beliaev A.S."/>
            <person name="Richardson P."/>
        </authorList>
    </citation>
    <scope>NUCLEOTIDE SEQUENCE [LARGE SCALE GENOMIC DNA]</scope>
    <source>
        <strain>2CP-1 / ATCC BAA-258</strain>
    </source>
</reference>
<feature type="chain" id="PRO_1000135517" description="Glucose-6-phosphate isomerase">
    <location>
        <begin position="1"/>
        <end position="546"/>
    </location>
</feature>
<feature type="active site" description="Proton donor" evidence="1">
    <location>
        <position position="357"/>
    </location>
</feature>
<feature type="active site" evidence="1">
    <location>
        <position position="389"/>
    </location>
</feature>
<feature type="active site" evidence="1">
    <location>
        <position position="509"/>
    </location>
</feature>
<keyword id="KW-0963">Cytoplasm</keyword>
<keyword id="KW-0312">Gluconeogenesis</keyword>
<keyword id="KW-0324">Glycolysis</keyword>
<keyword id="KW-0413">Isomerase</keyword>
<dbReference type="EC" id="5.3.1.9" evidence="1"/>
<dbReference type="EMBL" id="CP001359">
    <property type="protein sequence ID" value="ACL66606.1"/>
    <property type="molecule type" value="Genomic_DNA"/>
</dbReference>
<dbReference type="RefSeq" id="WP_015934419.1">
    <property type="nucleotide sequence ID" value="NC_011891.1"/>
</dbReference>
<dbReference type="SMR" id="B8JGW9"/>
<dbReference type="KEGG" id="acp:A2cp1_3272"/>
<dbReference type="HOGENOM" id="CLU_017947_3_1_7"/>
<dbReference type="UniPathway" id="UPA00109">
    <property type="reaction ID" value="UER00181"/>
</dbReference>
<dbReference type="UniPathway" id="UPA00138"/>
<dbReference type="Proteomes" id="UP000007089">
    <property type="component" value="Chromosome"/>
</dbReference>
<dbReference type="GO" id="GO:0005829">
    <property type="term" value="C:cytosol"/>
    <property type="evidence" value="ECO:0007669"/>
    <property type="project" value="TreeGrafter"/>
</dbReference>
<dbReference type="GO" id="GO:0097367">
    <property type="term" value="F:carbohydrate derivative binding"/>
    <property type="evidence" value="ECO:0007669"/>
    <property type="project" value="InterPro"/>
</dbReference>
<dbReference type="GO" id="GO:0004347">
    <property type="term" value="F:glucose-6-phosphate isomerase activity"/>
    <property type="evidence" value="ECO:0007669"/>
    <property type="project" value="UniProtKB-UniRule"/>
</dbReference>
<dbReference type="GO" id="GO:0048029">
    <property type="term" value="F:monosaccharide binding"/>
    <property type="evidence" value="ECO:0007669"/>
    <property type="project" value="TreeGrafter"/>
</dbReference>
<dbReference type="GO" id="GO:0006094">
    <property type="term" value="P:gluconeogenesis"/>
    <property type="evidence" value="ECO:0007669"/>
    <property type="project" value="UniProtKB-UniRule"/>
</dbReference>
<dbReference type="GO" id="GO:0051156">
    <property type="term" value="P:glucose 6-phosphate metabolic process"/>
    <property type="evidence" value="ECO:0007669"/>
    <property type="project" value="TreeGrafter"/>
</dbReference>
<dbReference type="GO" id="GO:0006096">
    <property type="term" value="P:glycolytic process"/>
    <property type="evidence" value="ECO:0007669"/>
    <property type="project" value="UniProtKB-UniRule"/>
</dbReference>
<dbReference type="CDD" id="cd05015">
    <property type="entry name" value="SIS_PGI_1"/>
    <property type="match status" value="1"/>
</dbReference>
<dbReference type="CDD" id="cd05016">
    <property type="entry name" value="SIS_PGI_2"/>
    <property type="match status" value="1"/>
</dbReference>
<dbReference type="FunFam" id="1.10.1390.10:FF:000001">
    <property type="entry name" value="Glucose-6-phosphate isomerase"/>
    <property type="match status" value="1"/>
</dbReference>
<dbReference type="FunFam" id="3.40.50.10490:FF:000018">
    <property type="entry name" value="Glucose-6-phosphate isomerase"/>
    <property type="match status" value="1"/>
</dbReference>
<dbReference type="Gene3D" id="1.10.1390.10">
    <property type="match status" value="1"/>
</dbReference>
<dbReference type="Gene3D" id="3.40.50.10490">
    <property type="entry name" value="Glucose-6-phosphate isomerase like protein, domain 1"/>
    <property type="match status" value="2"/>
</dbReference>
<dbReference type="HAMAP" id="MF_00473">
    <property type="entry name" value="G6P_isomerase"/>
    <property type="match status" value="1"/>
</dbReference>
<dbReference type="InterPro" id="IPR001672">
    <property type="entry name" value="G6P_Isomerase"/>
</dbReference>
<dbReference type="InterPro" id="IPR023096">
    <property type="entry name" value="G6P_Isomerase_C"/>
</dbReference>
<dbReference type="InterPro" id="IPR018189">
    <property type="entry name" value="Phosphoglucose_isomerase_CS"/>
</dbReference>
<dbReference type="InterPro" id="IPR046348">
    <property type="entry name" value="SIS_dom_sf"/>
</dbReference>
<dbReference type="InterPro" id="IPR035476">
    <property type="entry name" value="SIS_PGI_1"/>
</dbReference>
<dbReference type="InterPro" id="IPR035482">
    <property type="entry name" value="SIS_PGI_2"/>
</dbReference>
<dbReference type="NCBIfam" id="NF001211">
    <property type="entry name" value="PRK00179.1"/>
    <property type="match status" value="1"/>
</dbReference>
<dbReference type="PANTHER" id="PTHR11469">
    <property type="entry name" value="GLUCOSE-6-PHOSPHATE ISOMERASE"/>
    <property type="match status" value="1"/>
</dbReference>
<dbReference type="PANTHER" id="PTHR11469:SF1">
    <property type="entry name" value="GLUCOSE-6-PHOSPHATE ISOMERASE"/>
    <property type="match status" value="1"/>
</dbReference>
<dbReference type="Pfam" id="PF00342">
    <property type="entry name" value="PGI"/>
    <property type="match status" value="1"/>
</dbReference>
<dbReference type="PRINTS" id="PR00662">
    <property type="entry name" value="G6PISOMERASE"/>
</dbReference>
<dbReference type="SUPFAM" id="SSF53697">
    <property type="entry name" value="SIS domain"/>
    <property type="match status" value="1"/>
</dbReference>
<dbReference type="PROSITE" id="PS00765">
    <property type="entry name" value="P_GLUCOSE_ISOMERASE_1"/>
    <property type="match status" value="1"/>
</dbReference>
<dbReference type="PROSITE" id="PS00174">
    <property type="entry name" value="P_GLUCOSE_ISOMERASE_2"/>
    <property type="match status" value="1"/>
</dbReference>
<dbReference type="PROSITE" id="PS51463">
    <property type="entry name" value="P_GLUCOSE_ISOMERASE_3"/>
    <property type="match status" value="1"/>
</dbReference>
<sequence>MPDRTGPLLRTPAWRALEAHLAELQPLHLRELFARDPGRGERLVADGAGLHLDYSKQRVTEETVRLLVALAEARGLPERRAAMFRGEKVNVTEGRAVLHVALRAPRGERILVDGNDVVPEVHAVLDRMAAFADQVRSGAWTGFTGKRIRTVVNVGIGGSDLGPAMAYRALRAYAIRDLAFRFVSNVDGTDLAEAVRDLDPAETLFLVASKTFTTLETMTNAASARSWLLAALGDPRAVARHFVAISTNEAEVRRFGIDPANMFGFWDWVGGRYSMDSAIGLSTMIAVGPEGFRELLAGFREMDEHFRDAPLERNLPALIGLIGVWNANLLGAGTVAVLPYDQYLDRFPAYLQQLTMESNGKRVTASGTPVEGHGTGAIYWGEPGTNGQHSFYQLLHQGTHLVACDFIGFCQPLHALGRHHDLLMANLFAQGEALAFGKTAEEARAEGTPEPLVPHRTFPGNRPSSTILSDRLTPRTLGALVALYEHAVFTQGVIWDVDSFDQWGVELGKVLANRIVKELESPAEPALAHDGSTNALIRRYRARRGG</sequence>
<protein>
    <recommendedName>
        <fullName evidence="1">Glucose-6-phosphate isomerase</fullName>
        <shortName evidence="1">GPI</shortName>
        <ecNumber evidence="1">5.3.1.9</ecNumber>
    </recommendedName>
    <alternativeName>
        <fullName evidence="1">Phosphoglucose isomerase</fullName>
        <shortName evidence="1">PGI</shortName>
    </alternativeName>
    <alternativeName>
        <fullName evidence="1">Phosphohexose isomerase</fullName>
        <shortName evidence="1">PHI</shortName>
    </alternativeName>
</protein>
<comment type="function">
    <text evidence="1">Catalyzes the reversible isomerization of glucose-6-phosphate to fructose-6-phosphate.</text>
</comment>
<comment type="catalytic activity">
    <reaction evidence="1">
        <text>alpha-D-glucose 6-phosphate = beta-D-fructose 6-phosphate</text>
        <dbReference type="Rhea" id="RHEA:11816"/>
        <dbReference type="ChEBI" id="CHEBI:57634"/>
        <dbReference type="ChEBI" id="CHEBI:58225"/>
        <dbReference type="EC" id="5.3.1.9"/>
    </reaction>
</comment>
<comment type="pathway">
    <text evidence="1">Carbohydrate biosynthesis; gluconeogenesis.</text>
</comment>
<comment type="pathway">
    <text evidence="1">Carbohydrate degradation; glycolysis; D-glyceraldehyde 3-phosphate and glycerone phosphate from D-glucose: step 2/4.</text>
</comment>
<comment type="subcellular location">
    <subcellularLocation>
        <location evidence="1">Cytoplasm</location>
    </subcellularLocation>
</comment>
<comment type="similarity">
    <text evidence="1">Belongs to the GPI family.</text>
</comment>
<gene>
    <name evidence="1" type="primary">pgi</name>
    <name type="ordered locus">A2cp1_3272</name>
</gene>
<accession>B8JGW9</accession>
<proteinExistence type="inferred from homology"/>
<evidence type="ECO:0000255" key="1">
    <source>
        <dbReference type="HAMAP-Rule" id="MF_00473"/>
    </source>
</evidence>
<name>G6PI_ANAD2</name>